<organism>
    <name type="scientific">Aquifex aeolicus (strain VF5)</name>
    <dbReference type="NCBI Taxonomy" id="224324"/>
    <lineage>
        <taxon>Bacteria</taxon>
        <taxon>Pseudomonadati</taxon>
        <taxon>Aquificota</taxon>
        <taxon>Aquificia</taxon>
        <taxon>Aquificales</taxon>
        <taxon>Aquificaceae</taxon>
        <taxon>Aquifex</taxon>
    </lineage>
</organism>
<keyword id="KW-0963">Cytoplasm</keyword>
<keyword id="KW-0350">Heme biosynthesis</keyword>
<keyword id="KW-0408">Iron</keyword>
<keyword id="KW-0456">Lyase</keyword>
<keyword id="KW-0479">Metal-binding</keyword>
<keyword id="KW-0627">Porphyrin biosynthesis</keyword>
<keyword id="KW-1185">Reference proteome</keyword>
<protein>
    <recommendedName>
        <fullName evidence="1">Ferrochelatase</fullName>
        <ecNumber evidence="1">4.98.1.1</ecNumber>
    </recommendedName>
    <alternativeName>
        <fullName evidence="1">Heme synthase</fullName>
    </alternativeName>
    <alternativeName>
        <fullName evidence="1">Protoheme ferro-lyase</fullName>
    </alternativeName>
</protein>
<comment type="function">
    <text evidence="1">Catalyzes the ferrous insertion into protoporphyrin IX.</text>
</comment>
<comment type="catalytic activity">
    <reaction evidence="1">
        <text>heme b + 2 H(+) = protoporphyrin IX + Fe(2+)</text>
        <dbReference type="Rhea" id="RHEA:22584"/>
        <dbReference type="ChEBI" id="CHEBI:15378"/>
        <dbReference type="ChEBI" id="CHEBI:29033"/>
        <dbReference type="ChEBI" id="CHEBI:57306"/>
        <dbReference type="ChEBI" id="CHEBI:60344"/>
        <dbReference type="EC" id="4.98.1.1"/>
    </reaction>
</comment>
<comment type="pathway">
    <text evidence="1">Porphyrin-containing compound metabolism; protoheme biosynthesis; protoheme from protoporphyrin-IX: step 1/1.</text>
</comment>
<comment type="subcellular location">
    <subcellularLocation>
        <location evidence="1">Cytoplasm</location>
    </subcellularLocation>
</comment>
<comment type="similarity">
    <text evidence="1 2">Belongs to the ferrochelatase family.</text>
</comment>
<name>HEMH_AQUAE</name>
<gene>
    <name evidence="1" type="primary">hemH</name>
    <name type="ordered locus">aq_948</name>
</gene>
<accession>O67083</accession>
<reference key="1">
    <citation type="journal article" date="1998" name="Nature">
        <title>The complete genome of the hyperthermophilic bacterium Aquifex aeolicus.</title>
        <authorList>
            <person name="Deckert G."/>
            <person name="Warren P.V."/>
            <person name="Gaasterland T."/>
            <person name="Young W.G."/>
            <person name="Lenox A.L."/>
            <person name="Graham D.E."/>
            <person name="Overbeek R."/>
            <person name="Snead M.A."/>
            <person name="Keller M."/>
            <person name="Aujay M."/>
            <person name="Huber R."/>
            <person name="Feldman R.A."/>
            <person name="Short J.M."/>
            <person name="Olsen G.J."/>
            <person name="Swanson R.V."/>
        </authorList>
    </citation>
    <scope>NUCLEOTIDE SEQUENCE [LARGE SCALE GENOMIC DNA]</scope>
    <source>
        <strain>VF5</strain>
    </source>
</reference>
<proteinExistence type="inferred from homology"/>
<feature type="chain" id="PRO_0000175101" description="Ferrochelatase">
    <location>
        <begin position="1"/>
        <end position="309"/>
    </location>
</feature>
<feature type="binding site" evidence="1">
    <location>
        <position position="185"/>
    </location>
    <ligand>
        <name>Fe cation</name>
        <dbReference type="ChEBI" id="CHEBI:24875"/>
    </ligand>
</feature>
<feature type="binding site" evidence="1">
    <location>
        <position position="264"/>
    </location>
    <ligand>
        <name>Fe cation</name>
        <dbReference type="ChEBI" id="CHEBI:24875"/>
    </ligand>
</feature>
<sequence>MKKGVILINLGGPDSLEAVEPFLYNLFSDPDIFSLPFQKVLAKIIAKLRAKKTRHYYELMGGKSPQYEQTLEQAKALQERLGEDYKVVVGMRYWKPYIKDALSELLKEGINEVILLPLYPQYSKTTTGSAFNEFERSKKALKADHIKVKKIEHFYDHPLYIKAWAEQIKQSVEKPEEYHFLFSAHSLPKKLIEEGDPYQEQTEKTVKLIMENFPEVEYTLAYQSKVGFGKWLEPSTDEVIRNLIKKEVKKLLVIPISFVSEHSETLYELDKQYRELAQELGYEEFVRVPTLRTNPYFISALEDLVKNEV</sequence>
<dbReference type="EC" id="4.98.1.1" evidence="1"/>
<dbReference type="EMBL" id="AE000657">
    <property type="protein sequence ID" value="AAC07043.1"/>
    <property type="molecule type" value="Genomic_DNA"/>
</dbReference>
<dbReference type="PIR" id="H70381">
    <property type="entry name" value="H70381"/>
</dbReference>
<dbReference type="RefSeq" id="NP_213646.1">
    <property type="nucleotide sequence ID" value="NC_000918.1"/>
</dbReference>
<dbReference type="RefSeq" id="WP_010880584.1">
    <property type="nucleotide sequence ID" value="NC_000918.1"/>
</dbReference>
<dbReference type="SMR" id="O67083"/>
<dbReference type="FunCoup" id="O67083">
    <property type="interactions" value="363"/>
</dbReference>
<dbReference type="STRING" id="224324.aq_948"/>
<dbReference type="EnsemblBacteria" id="AAC07043">
    <property type="protein sequence ID" value="AAC07043"/>
    <property type="gene ID" value="aq_948"/>
</dbReference>
<dbReference type="KEGG" id="aae:aq_948"/>
<dbReference type="PATRIC" id="fig|224324.8.peg.744"/>
<dbReference type="eggNOG" id="COG0276">
    <property type="taxonomic scope" value="Bacteria"/>
</dbReference>
<dbReference type="HOGENOM" id="CLU_018884_4_1_0"/>
<dbReference type="InParanoid" id="O67083"/>
<dbReference type="OrthoDB" id="9776380at2"/>
<dbReference type="UniPathway" id="UPA00252">
    <property type="reaction ID" value="UER00325"/>
</dbReference>
<dbReference type="Proteomes" id="UP000000798">
    <property type="component" value="Chromosome"/>
</dbReference>
<dbReference type="GO" id="GO:0005737">
    <property type="term" value="C:cytoplasm"/>
    <property type="evidence" value="ECO:0007669"/>
    <property type="project" value="UniProtKB-SubCell"/>
</dbReference>
<dbReference type="GO" id="GO:0004325">
    <property type="term" value="F:ferrochelatase activity"/>
    <property type="evidence" value="ECO:0000318"/>
    <property type="project" value="GO_Central"/>
</dbReference>
<dbReference type="GO" id="GO:0046872">
    <property type="term" value="F:metal ion binding"/>
    <property type="evidence" value="ECO:0007669"/>
    <property type="project" value="UniProtKB-KW"/>
</dbReference>
<dbReference type="GO" id="GO:0006783">
    <property type="term" value="P:heme biosynthetic process"/>
    <property type="evidence" value="ECO:0000318"/>
    <property type="project" value="GO_Central"/>
</dbReference>
<dbReference type="CDD" id="cd00419">
    <property type="entry name" value="Ferrochelatase_C"/>
    <property type="match status" value="1"/>
</dbReference>
<dbReference type="CDD" id="cd03411">
    <property type="entry name" value="Ferrochelatase_N"/>
    <property type="match status" value="1"/>
</dbReference>
<dbReference type="FunFam" id="3.40.50.1400:FF:000006">
    <property type="entry name" value="Ferrochelatase"/>
    <property type="match status" value="1"/>
</dbReference>
<dbReference type="Gene3D" id="3.40.50.1400">
    <property type="match status" value="2"/>
</dbReference>
<dbReference type="HAMAP" id="MF_00323">
    <property type="entry name" value="Ferrochelatase"/>
    <property type="match status" value="1"/>
</dbReference>
<dbReference type="InterPro" id="IPR001015">
    <property type="entry name" value="Ferrochelatase"/>
</dbReference>
<dbReference type="InterPro" id="IPR019772">
    <property type="entry name" value="Ferrochelatase_AS"/>
</dbReference>
<dbReference type="InterPro" id="IPR033644">
    <property type="entry name" value="Ferrochelatase_C"/>
</dbReference>
<dbReference type="InterPro" id="IPR033659">
    <property type="entry name" value="Ferrochelatase_N"/>
</dbReference>
<dbReference type="NCBIfam" id="TIGR00109">
    <property type="entry name" value="hemH"/>
    <property type="match status" value="1"/>
</dbReference>
<dbReference type="PANTHER" id="PTHR11108">
    <property type="entry name" value="FERROCHELATASE"/>
    <property type="match status" value="1"/>
</dbReference>
<dbReference type="PANTHER" id="PTHR11108:SF1">
    <property type="entry name" value="FERROCHELATASE, MITOCHONDRIAL"/>
    <property type="match status" value="1"/>
</dbReference>
<dbReference type="Pfam" id="PF00762">
    <property type="entry name" value="Ferrochelatase"/>
    <property type="match status" value="1"/>
</dbReference>
<dbReference type="SUPFAM" id="SSF53800">
    <property type="entry name" value="Chelatase"/>
    <property type="match status" value="1"/>
</dbReference>
<dbReference type="PROSITE" id="PS00534">
    <property type="entry name" value="FERROCHELATASE"/>
    <property type="match status" value="1"/>
</dbReference>
<evidence type="ECO:0000255" key="1">
    <source>
        <dbReference type="HAMAP-Rule" id="MF_00323"/>
    </source>
</evidence>
<evidence type="ECO:0000305" key="2"/>